<reference key="1">
    <citation type="submission" date="2008-08" db="EMBL/GenBank/DDBJ databases">
        <title>Complete sequence of Vibrio fischeri strain MJ11.</title>
        <authorList>
            <person name="Mandel M.J."/>
            <person name="Stabb E.V."/>
            <person name="Ruby E.G."/>
            <person name="Ferriera S."/>
            <person name="Johnson J."/>
            <person name="Kravitz S."/>
            <person name="Beeson K."/>
            <person name="Sutton G."/>
            <person name="Rogers Y.-H."/>
            <person name="Friedman R."/>
            <person name="Frazier M."/>
            <person name="Venter J.C."/>
        </authorList>
    </citation>
    <scope>NUCLEOTIDE SEQUENCE [LARGE SCALE GENOMIC DNA]</scope>
    <source>
        <strain>MJ11</strain>
    </source>
</reference>
<evidence type="ECO:0000255" key="1">
    <source>
        <dbReference type="HAMAP-Rule" id="MF_00126"/>
    </source>
</evidence>
<keyword id="KW-0030">Aminoacyl-tRNA synthetase</keyword>
<keyword id="KW-0067">ATP-binding</keyword>
<keyword id="KW-0963">Cytoplasm</keyword>
<keyword id="KW-0436">Ligase</keyword>
<keyword id="KW-0547">Nucleotide-binding</keyword>
<keyword id="KW-0648">Protein biosynthesis</keyword>
<dbReference type="EC" id="6.1.1.18" evidence="1"/>
<dbReference type="EMBL" id="CP001139">
    <property type="protein sequence ID" value="ACH65419.1"/>
    <property type="molecule type" value="Genomic_DNA"/>
</dbReference>
<dbReference type="RefSeq" id="WP_005418271.1">
    <property type="nucleotide sequence ID" value="NC_011184.1"/>
</dbReference>
<dbReference type="SMR" id="B5FC12"/>
<dbReference type="GeneID" id="54163477"/>
<dbReference type="KEGG" id="vfm:VFMJ11_0847"/>
<dbReference type="HOGENOM" id="CLU_001882_2_3_6"/>
<dbReference type="Proteomes" id="UP000001857">
    <property type="component" value="Chromosome I"/>
</dbReference>
<dbReference type="GO" id="GO:0005829">
    <property type="term" value="C:cytosol"/>
    <property type="evidence" value="ECO:0007669"/>
    <property type="project" value="TreeGrafter"/>
</dbReference>
<dbReference type="GO" id="GO:0005524">
    <property type="term" value="F:ATP binding"/>
    <property type="evidence" value="ECO:0007669"/>
    <property type="project" value="UniProtKB-UniRule"/>
</dbReference>
<dbReference type="GO" id="GO:0004819">
    <property type="term" value="F:glutamine-tRNA ligase activity"/>
    <property type="evidence" value="ECO:0007669"/>
    <property type="project" value="UniProtKB-UniRule"/>
</dbReference>
<dbReference type="GO" id="GO:0006425">
    <property type="term" value="P:glutaminyl-tRNA aminoacylation"/>
    <property type="evidence" value="ECO:0007669"/>
    <property type="project" value="InterPro"/>
</dbReference>
<dbReference type="GO" id="GO:0006424">
    <property type="term" value="P:glutamyl-tRNA aminoacylation"/>
    <property type="evidence" value="ECO:0007669"/>
    <property type="project" value="UniProtKB-UniRule"/>
</dbReference>
<dbReference type="CDD" id="cd00807">
    <property type="entry name" value="GlnRS_core"/>
    <property type="match status" value="1"/>
</dbReference>
<dbReference type="FunFam" id="1.10.1160.10:FF:000001">
    <property type="entry name" value="Glutamine--tRNA ligase"/>
    <property type="match status" value="1"/>
</dbReference>
<dbReference type="FunFam" id="2.40.240.10:FF:000001">
    <property type="entry name" value="Glutamine--tRNA ligase"/>
    <property type="match status" value="1"/>
</dbReference>
<dbReference type="FunFam" id="2.40.240.10:FF:000003">
    <property type="entry name" value="Glutamine--tRNA ligase"/>
    <property type="match status" value="1"/>
</dbReference>
<dbReference type="FunFam" id="3.90.800.10:FF:000001">
    <property type="entry name" value="Glutamine--tRNA ligase"/>
    <property type="match status" value="1"/>
</dbReference>
<dbReference type="FunFam" id="3.40.50.620:FF:000037">
    <property type="entry name" value="Glutamine--tRNA ligase cytoplasmic"/>
    <property type="match status" value="1"/>
</dbReference>
<dbReference type="Gene3D" id="1.10.1160.10">
    <property type="entry name" value="Glutamyl-trna Synthetase, Domain 2"/>
    <property type="match status" value="1"/>
</dbReference>
<dbReference type="Gene3D" id="3.90.800.10">
    <property type="entry name" value="Glutamyl-tRNA Synthetase, Domain 3"/>
    <property type="match status" value="1"/>
</dbReference>
<dbReference type="Gene3D" id="3.40.50.620">
    <property type="entry name" value="HUPs"/>
    <property type="match status" value="1"/>
</dbReference>
<dbReference type="Gene3D" id="2.40.240.10">
    <property type="entry name" value="Ribosomal Protein L25, Chain P"/>
    <property type="match status" value="2"/>
</dbReference>
<dbReference type="HAMAP" id="MF_00126">
    <property type="entry name" value="Gln_tRNA_synth"/>
    <property type="match status" value="1"/>
</dbReference>
<dbReference type="InterPro" id="IPR001412">
    <property type="entry name" value="aa-tRNA-synth_I_CS"/>
</dbReference>
<dbReference type="InterPro" id="IPR004514">
    <property type="entry name" value="Gln-tRNA-synth"/>
</dbReference>
<dbReference type="InterPro" id="IPR050132">
    <property type="entry name" value="Gln/Glu-tRNA_Ligase"/>
</dbReference>
<dbReference type="InterPro" id="IPR022861">
    <property type="entry name" value="Gln_tRNA_ligase_bac"/>
</dbReference>
<dbReference type="InterPro" id="IPR000924">
    <property type="entry name" value="Glu/Gln-tRNA-synth"/>
</dbReference>
<dbReference type="InterPro" id="IPR020058">
    <property type="entry name" value="Glu/Gln-tRNA-synth_Ib_cat-dom"/>
</dbReference>
<dbReference type="InterPro" id="IPR020059">
    <property type="entry name" value="Glu/Gln-tRNA-synth_Ib_codon-bd"/>
</dbReference>
<dbReference type="InterPro" id="IPR020061">
    <property type="entry name" value="Glu_tRNA_lig_a-bdl"/>
</dbReference>
<dbReference type="InterPro" id="IPR020056">
    <property type="entry name" value="Rbsml_bL25/Gln-tRNA_synth_N"/>
</dbReference>
<dbReference type="InterPro" id="IPR011035">
    <property type="entry name" value="Ribosomal_bL25/Gln-tRNA_synth"/>
</dbReference>
<dbReference type="InterPro" id="IPR014729">
    <property type="entry name" value="Rossmann-like_a/b/a_fold"/>
</dbReference>
<dbReference type="InterPro" id="IPR049437">
    <property type="entry name" value="tRNA-synt_1c_C2"/>
</dbReference>
<dbReference type="NCBIfam" id="TIGR00440">
    <property type="entry name" value="glnS"/>
    <property type="match status" value="1"/>
</dbReference>
<dbReference type="NCBIfam" id="NF011291">
    <property type="entry name" value="PRK14703.1"/>
    <property type="match status" value="1"/>
</dbReference>
<dbReference type="PANTHER" id="PTHR43097:SF5">
    <property type="entry name" value="GLUTAMATE--TRNA LIGASE"/>
    <property type="match status" value="1"/>
</dbReference>
<dbReference type="PANTHER" id="PTHR43097">
    <property type="entry name" value="GLUTAMINE-TRNA LIGASE"/>
    <property type="match status" value="1"/>
</dbReference>
<dbReference type="Pfam" id="PF00749">
    <property type="entry name" value="tRNA-synt_1c"/>
    <property type="match status" value="1"/>
</dbReference>
<dbReference type="Pfam" id="PF03950">
    <property type="entry name" value="tRNA-synt_1c_C"/>
    <property type="match status" value="1"/>
</dbReference>
<dbReference type="Pfam" id="PF20974">
    <property type="entry name" value="tRNA-synt_1c_C2"/>
    <property type="match status" value="1"/>
</dbReference>
<dbReference type="PRINTS" id="PR00987">
    <property type="entry name" value="TRNASYNTHGLU"/>
</dbReference>
<dbReference type="SUPFAM" id="SSF52374">
    <property type="entry name" value="Nucleotidylyl transferase"/>
    <property type="match status" value="1"/>
</dbReference>
<dbReference type="SUPFAM" id="SSF50715">
    <property type="entry name" value="Ribosomal protein L25-like"/>
    <property type="match status" value="1"/>
</dbReference>
<dbReference type="PROSITE" id="PS00178">
    <property type="entry name" value="AA_TRNA_LIGASE_I"/>
    <property type="match status" value="1"/>
</dbReference>
<sequence length="552" mass="63394">MSETETRPTNFIRQIIDEDLKSGKHSSVHTRFPPEPNGYLHIGHAKSICLNFGIAQDYQGQCNLRFDDTNPEKEDIEYVESIKNDVNWLGFQWSGDIQYSSNYFDKLYGYAVELIEKGLAYVDELTPEQMREYRGSLKEPGKNSPYRDRSVEENLALFEQMRDGKFKEGTICLRAKIDMASSFIVLRDPVIYRVRFATHHQTGDKWCIYPMYDFTHCISDALEGITHSICTLEFQDNRRLYDWVLENITIDCQPRQYEFSRLNLEYTVMSKRKLNQLVTEKLVNGWDDPRMPTVSGLRRRGFTSASIREFCKRIGVTKQENMIEFSSLESCIRDDLNESAPRAMAVLEPVKLVIENYEEGKVETLNIANHPNKPEMGTREVPFTREVYIEQDDFREEANKKYKRLVLGKEVRLRGAYVIQANRIEKDEAGNITTIFCSYDEDTLGKNPADGRKVKGVIHWVSADKALPAEIRLYDRLFTVPNPGAADDFAATINPESLVVKNGFVEPSLATAEAEVGYQFERTGYFCADNKDSSADALVFNRTVGLRDTWAG</sequence>
<feature type="chain" id="PRO_1000095517" description="Glutamine--tRNA ligase">
    <location>
        <begin position="1"/>
        <end position="552"/>
    </location>
</feature>
<feature type="short sequence motif" description="'HIGH' region" evidence="1">
    <location>
        <begin position="34"/>
        <end position="44"/>
    </location>
</feature>
<feature type="short sequence motif" description="'KMSKS' region" evidence="1">
    <location>
        <begin position="268"/>
        <end position="272"/>
    </location>
</feature>
<feature type="binding site" evidence="1">
    <location>
        <begin position="35"/>
        <end position="37"/>
    </location>
    <ligand>
        <name>ATP</name>
        <dbReference type="ChEBI" id="CHEBI:30616"/>
    </ligand>
</feature>
<feature type="binding site" evidence="1">
    <location>
        <begin position="41"/>
        <end position="47"/>
    </location>
    <ligand>
        <name>ATP</name>
        <dbReference type="ChEBI" id="CHEBI:30616"/>
    </ligand>
</feature>
<feature type="binding site" evidence="1">
    <location>
        <position position="67"/>
    </location>
    <ligand>
        <name>L-glutamine</name>
        <dbReference type="ChEBI" id="CHEBI:58359"/>
    </ligand>
</feature>
<feature type="binding site" evidence="1">
    <location>
        <position position="212"/>
    </location>
    <ligand>
        <name>L-glutamine</name>
        <dbReference type="ChEBI" id="CHEBI:58359"/>
    </ligand>
</feature>
<feature type="binding site" evidence="1">
    <location>
        <position position="231"/>
    </location>
    <ligand>
        <name>ATP</name>
        <dbReference type="ChEBI" id="CHEBI:30616"/>
    </ligand>
</feature>
<feature type="binding site" evidence="1">
    <location>
        <begin position="261"/>
        <end position="262"/>
    </location>
    <ligand>
        <name>ATP</name>
        <dbReference type="ChEBI" id="CHEBI:30616"/>
    </ligand>
</feature>
<feature type="binding site" evidence="1">
    <location>
        <begin position="269"/>
        <end position="271"/>
    </location>
    <ligand>
        <name>ATP</name>
        <dbReference type="ChEBI" id="CHEBI:30616"/>
    </ligand>
</feature>
<protein>
    <recommendedName>
        <fullName evidence="1">Glutamine--tRNA ligase</fullName>
        <ecNumber evidence="1">6.1.1.18</ecNumber>
    </recommendedName>
    <alternativeName>
        <fullName evidence="1">Glutaminyl-tRNA synthetase</fullName>
        <shortName evidence="1">GlnRS</shortName>
    </alternativeName>
</protein>
<comment type="catalytic activity">
    <reaction evidence="1">
        <text>tRNA(Gln) + L-glutamine + ATP = L-glutaminyl-tRNA(Gln) + AMP + diphosphate</text>
        <dbReference type="Rhea" id="RHEA:20121"/>
        <dbReference type="Rhea" id="RHEA-COMP:9662"/>
        <dbReference type="Rhea" id="RHEA-COMP:9681"/>
        <dbReference type="ChEBI" id="CHEBI:30616"/>
        <dbReference type="ChEBI" id="CHEBI:33019"/>
        <dbReference type="ChEBI" id="CHEBI:58359"/>
        <dbReference type="ChEBI" id="CHEBI:78442"/>
        <dbReference type="ChEBI" id="CHEBI:78521"/>
        <dbReference type="ChEBI" id="CHEBI:456215"/>
        <dbReference type="EC" id="6.1.1.18"/>
    </reaction>
</comment>
<comment type="subunit">
    <text evidence="1">Monomer.</text>
</comment>
<comment type="subcellular location">
    <subcellularLocation>
        <location evidence="1">Cytoplasm</location>
    </subcellularLocation>
</comment>
<comment type="similarity">
    <text evidence="1">Belongs to the class-I aminoacyl-tRNA synthetase family.</text>
</comment>
<organism>
    <name type="scientific">Aliivibrio fischeri (strain MJ11)</name>
    <name type="common">Vibrio fischeri</name>
    <dbReference type="NCBI Taxonomy" id="388396"/>
    <lineage>
        <taxon>Bacteria</taxon>
        <taxon>Pseudomonadati</taxon>
        <taxon>Pseudomonadota</taxon>
        <taxon>Gammaproteobacteria</taxon>
        <taxon>Vibrionales</taxon>
        <taxon>Vibrionaceae</taxon>
        <taxon>Aliivibrio</taxon>
    </lineage>
</organism>
<name>SYQ_ALIFM</name>
<proteinExistence type="inferred from homology"/>
<accession>B5FC12</accession>
<gene>
    <name evidence="1" type="primary">glnS</name>
    <name type="ordered locus">VFMJ11_0847</name>
</gene>